<accession>Q56XE4</accession>
<accession>Q84VV2</accession>
<accession>Q9ZR19</accession>
<comment type="function">
    <text evidence="1">Component of the spliceosomal U1 snRNP, which is essential for recognition of the pre-mRNA 5' splice-site and the subsequent assembly of the spliceosome. U1-C is directly involved in initial 5' splice-site recognition for both constitutive and regulated alternative splicing. The interaction with the 5' splice-site seems to precede base-pairing between the pre-mRNA and the U1 snRNA. Stimulates commitment or early (E) complex formation by stabilizing the base pairing of the 5' end of the U1 snRNA and the 5' splice-site region.</text>
</comment>
<comment type="subunit">
    <text evidence="1">U1 snRNP is composed of the 7 core Sm proteins B/B', D1, D2, D3, E, F and G that assemble in a heptameric protein ring on the Sm site of the small nuclear RNA to form the core snRNP, and at least 3 U1 snRNP-specific proteins U1-70K, U1-A and U1-C. U1-C interacts with U1 snRNA and the 5' splice-site region of the pre-mRNA.</text>
</comment>
<comment type="subcellular location">
    <subcellularLocation>
        <location evidence="1">Nucleus</location>
    </subcellularLocation>
</comment>
<comment type="similarity">
    <text evidence="1">Belongs to the U1 small nuclear ribonucleoprotein C family.</text>
</comment>
<comment type="sequence caution" evidence="3">
    <conflict type="erroneous gene model prediction">
        <sequence resource="EMBL-CDS" id="AAD14440"/>
    </conflict>
</comment>
<comment type="sequence caution" evidence="3">
    <conflict type="erroneous gene model prediction">
        <sequence resource="EMBL-CDS" id="CAB77797"/>
    </conflict>
</comment>
<dbReference type="EMBL" id="AC005275">
    <property type="protein sequence ID" value="AAD14440.1"/>
    <property type="status" value="ALT_SEQ"/>
    <property type="molecule type" value="Genomic_DNA"/>
</dbReference>
<dbReference type="EMBL" id="AL161496">
    <property type="protein sequence ID" value="CAB77797.1"/>
    <property type="status" value="ALT_SEQ"/>
    <property type="molecule type" value="Genomic_DNA"/>
</dbReference>
<dbReference type="EMBL" id="CP002687">
    <property type="protein sequence ID" value="AEE82276.1"/>
    <property type="molecule type" value="Genomic_DNA"/>
</dbReference>
<dbReference type="EMBL" id="BT004807">
    <property type="protein sequence ID" value="AAO44073.1"/>
    <property type="molecule type" value="mRNA"/>
</dbReference>
<dbReference type="EMBL" id="AK221730">
    <property type="protein sequence ID" value="BAD93742.1"/>
    <property type="molecule type" value="mRNA"/>
</dbReference>
<dbReference type="EMBL" id="AK227824">
    <property type="protein sequence ID" value="BAE99804.1"/>
    <property type="molecule type" value="mRNA"/>
</dbReference>
<dbReference type="PIR" id="F85039">
    <property type="entry name" value="F85039"/>
</dbReference>
<dbReference type="RefSeq" id="NP_567250.1">
    <property type="nucleotide sequence ID" value="NM_116546.3"/>
</dbReference>
<dbReference type="SMR" id="Q56XE4"/>
<dbReference type="BioGRID" id="13362">
    <property type="interactions" value="1"/>
</dbReference>
<dbReference type="FunCoup" id="Q56XE4">
    <property type="interactions" value="1835"/>
</dbReference>
<dbReference type="IntAct" id="Q56XE4">
    <property type="interactions" value="1"/>
</dbReference>
<dbReference type="STRING" id="3702.Q56XE4"/>
<dbReference type="iPTMnet" id="Q56XE4"/>
<dbReference type="PaxDb" id="3702-AT4G03120.1"/>
<dbReference type="ProteomicsDB" id="226612"/>
<dbReference type="EnsemblPlants" id="AT4G03120.1">
    <property type="protein sequence ID" value="AT4G03120.1"/>
    <property type="gene ID" value="AT4G03120"/>
</dbReference>
<dbReference type="GeneID" id="828071"/>
<dbReference type="Gramene" id="AT4G03120.1">
    <property type="protein sequence ID" value="AT4G03120.1"/>
    <property type="gene ID" value="AT4G03120"/>
</dbReference>
<dbReference type="KEGG" id="ath:AT4G03120"/>
<dbReference type="Araport" id="AT4G03120"/>
<dbReference type="TAIR" id="AT4G03120"/>
<dbReference type="eggNOG" id="KOG3454">
    <property type="taxonomic scope" value="Eukaryota"/>
</dbReference>
<dbReference type="HOGENOM" id="CLU_079697_1_0_1"/>
<dbReference type="InParanoid" id="Q56XE4"/>
<dbReference type="OMA" id="GWKFREN"/>
<dbReference type="OrthoDB" id="76567at2759"/>
<dbReference type="PRO" id="PR:Q56XE4"/>
<dbReference type="Proteomes" id="UP000006548">
    <property type="component" value="Chromosome 4"/>
</dbReference>
<dbReference type="ExpressionAtlas" id="Q56XE4">
    <property type="expression patterns" value="baseline and differential"/>
</dbReference>
<dbReference type="GO" id="GO:0000243">
    <property type="term" value="C:commitment complex"/>
    <property type="evidence" value="ECO:0007669"/>
    <property type="project" value="UniProtKB-UniRule"/>
</dbReference>
<dbReference type="GO" id="GO:0005685">
    <property type="term" value="C:U1 snRNP"/>
    <property type="evidence" value="ECO:0007669"/>
    <property type="project" value="UniProtKB-UniRule"/>
</dbReference>
<dbReference type="GO" id="GO:0071004">
    <property type="term" value="C:U2-type prespliceosome"/>
    <property type="evidence" value="ECO:0007669"/>
    <property type="project" value="UniProtKB-UniRule"/>
</dbReference>
<dbReference type="GO" id="GO:0003729">
    <property type="term" value="F:mRNA binding"/>
    <property type="evidence" value="ECO:0007669"/>
    <property type="project" value="UniProtKB-UniRule"/>
</dbReference>
<dbReference type="GO" id="GO:0030627">
    <property type="term" value="F:pre-mRNA 5'-splice site binding"/>
    <property type="evidence" value="ECO:0007669"/>
    <property type="project" value="InterPro"/>
</dbReference>
<dbReference type="GO" id="GO:0030619">
    <property type="term" value="F:U1 snRNA binding"/>
    <property type="evidence" value="ECO:0007669"/>
    <property type="project" value="UniProtKB-UniRule"/>
</dbReference>
<dbReference type="GO" id="GO:0008270">
    <property type="term" value="F:zinc ion binding"/>
    <property type="evidence" value="ECO:0007669"/>
    <property type="project" value="UniProtKB-UniRule"/>
</dbReference>
<dbReference type="GO" id="GO:0000395">
    <property type="term" value="P:mRNA 5'-splice site recognition"/>
    <property type="evidence" value="ECO:0007669"/>
    <property type="project" value="UniProtKB-UniRule"/>
</dbReference>
<dbReference type="GO" id="GO:0000387">
    <property type="term" value="P:spliceosomal snRNP assembly"/>
    <property type="evidence" value="ECO:0007669"/>
    <property type="project" value="UniProtKB-UniRule"/>
</dbReference>
<dbReference type="FunFam" id="3.30.160.60:FF:000059">
    <property type="entry name" value="U1 small nuclear ribonucleoprotein C"/>
    <property type="match status" value="1"/>
</dbReference>
<dbReference type="Gene3D" id="3.30.160.60">
    <property type="entry name" value="Classic Zinc Finger"/>
    <property type="match status" value="1"/>
</dbReference>
<dbReference type="HAMAP" id="MF_03153">
    <property type="entry name" value="U1_C"/>
    <property type="match status" value="1"/>
</dbReference>
<dbReference type="InterPro" id="IPR000690">
    <property type="entry name" value="Matrin/U1-C_Znf_C2H2"/>
</dbReference>
<dbReference type="InterPro" id="IPR003604">
    <property type="entry name" value="Matrin/U1-like-C_Znf_C2H2"/>
</dbReference>
<dbReference type="InterPro" id="IPR013085">
    <property type="entry name" value="U1-CZ_Znf_C2H2"/>
</dbReference>
<dbReference type="InterPro" id="IPR017340">
    <property type="entry name" value="U1_snRNP-C"/>
</dbReference>
<dbReference type="InterPro" id="IPR036236">
    <property type="entry name" value="Znf_C2H2_sf"/>
</dbReference>
<dbReference type="PANTHER" id="PTHR31148">
    <property type="entry name" value="U1 SMALL NUCLEAR RIBONUCLEOPROTEIN C"/>
    <property type="match status" value="1"/>
</dbReference>
<dbReference type="PANTHER" id="PTHR31148:SF1">
    <property type="entry name" value="U1 SMALL NUCLEAR RIBONUCLEOPROTEIN C"/>
    <property type="match status" value="1"/>
</dbReference>
<dbReference type="Pfam" id="PF06220">
    <property type="entry name" value="zf-U1"/>
    <property type="match status" value="1"/>
</dbReference>
<dbReference type="PIRSF" id="PIRSF037969">
    <property type="entry name" value="U1_snRNP-C"/>
    <property type="match status" value="1"/>
</dbReference>
<dbReference type="SMART" id="SM00451">
    <property type="entry name" value="ZnF_U1"/>
    <property type="match status" value="1"/>
</dbReference>
<dbReference type="SUPFAM" id="SSF57667">
    <property type="entry name" value="beta-beta-alpha zinc fingers"/>
    <property type="match status" value="1"/>
</dbReference>
<dbReference type="PROSITE" id="PS50171">
    <property type="entry name" value="ZF_MATRIN"/>
    <property type="match status" value="1"/>
</dbReference>
<evidence type="ECO:0000255" key="1">
    <source>
        <dbReference type="HAMAP-Rule" id="MF_03153"/>
    </source>
</evidence>
<evidence type="ECO:0000256" key="2">
    <source>
        <dbReference type="SAM" id="MobiDB-lite"/>
    </source>
</evidence>
<evidence type="ECO:0000305" key="3"/>
<name>RU1C_ARATH</name>
<reference key="1">
    <citation type="journal article" date="1999" name="Nature">
        <title>Sequence and analysis of chromosome 4 of the plant Arabidopsis thaliana.</title>
        <authorList>
            <person name="Mayer K.F.X."/>
            <person name="Schueller C."/>
            <person name="Wambutt R."/>
            <person name="Murphy G."/>
            <person name="Volckaert G."/>
            <person name="Pohl T."/>
            <person name="Duesterhoeft A."/>
            <person name="Stiekema W."/>
            <person name="Entian K.-D."/>
            <person name="Terryn N."/>
            <person name="Harris B."/>
            <person name="Ansorge W."/>
            <person name="Brandt P."/>
            <person name="Grivell L.A."/>
            <person name="Rieger M."/>
            <person name="Weichselgartner M."/>
            <person name="de Simone V."/>
            <person name="Obermaier B."/>
            <person name="Mache R."/>
            <person name="Mueller M."/>
            <person name="Kreis M."/>
            <person name="Delseny M."/>
            <person name="Puigdomenech P."/>
            <person name="Watson M."/>
            <person name="Schmidtheini T."/>
            <person name="Reichert B."/>
            <person name="Portetelle D."/>
            <person name="Perez-Alonso M."/>
            <person name="Boutry M."/>
            <person name="Bancroft I."/>
            <person name="Vos P."/>
            <person name="Hoheisel J."/>
            <person name="Zimmermann W."/>
            <person name="Wedler H."/>
            <person name="Ridley P."/>
            <person name="Langham S.-A."/>
            <person name="McCullagh B."/>
            <person name="Bilham L."/>
            <person name="Robben J."/>
            <person name="van der Schueren J."/>
            <person name="Grymonprez B."/>
            <person name="Chuang Y.-J."/>
            <person name="Vandenbussche F."/>
            <person name="Braeken M."/>
            <person name="Weltjens I."/>
            <person name="Voet M."/>
            <person name="Bastiaens I."/>
            <person name="Aert R."/>
            <person name="Defoor E."/>
            <person name="Weitzenegger T."/>
            <person name="Bothe G."/>
            <person name="Ramsperger U."/>
            <person name="Hilbert H."/>
            <person name="Braun M."/>
            <person name="Holzer E."/>
            <person name="Brandt A."/>
            <person name="Peters S."/>
            <person name="van Staveren M."/>
            <person name="Dirkse W."/>
            <person name="Mooijman P."/>
            <person name="Klein Lankhorst R."/>
            <person name="Rose M."/>
            <person name="Hauf J."/>
            <person name="Koetter P."/>
            <person name="Berneiser S."/>
            <person name="Hempel S."/>
            <person name="Feldpausch M."/>
            <person name="Lamberth S."/>
            <person name="Van den Daele H."/>
            <person name="De Keyser A."/>
            <person name="Buysshaert C."/>
            <person name="Gielen J."/>
            <person name="Villarroel R."/>
            <person name="De Clercq R."/>
            <person name="van Montagu M."/>
            <person name="Rogers J."/>
            <person name="Cronin A."/>
            <person name="Quail M.A."/>
            <person name="Bray-Allen S."/>
            <person name="Clark L."/>
            <person name="Doggett J."/>
            <person name="Hall S."/>
            <person name="Kay M."/>
            <person name="Lennard N."/>
            <person name="McLay K."/>
            <person name="Mayes R."/>
            <person name="Pettett A."/>
            <person name="Rajandream M.A."/>
            <person name="Lyne M."/>
            <person name="Benes V."/>
            <person name="Rechmann S."/>
            <person name="Borkova D."/>
            <person name="Bloecker H."/>
            <person name="Scharfe M."/>
            <person name="Grimm M."/>
            <person name="Loehnert T.-H."/>
            <person name="Dose S."/>
            <person name="de Haan M."/>
            <person name="Maarse A.C."/>
            <person name="Schaefer M."/>
            <person name="Mueller-Auer S."/>
            <person name="Gabel C."/>
            <person name="Fuchs M."/>
            <person name="Fartmann B."/>
            <person name="Granderath K."/>
            <person name="Dauner D."/>
            <person name="Herzl A."/>
            <person name="Neumann S."/>
            <person name="Argiriou A."/>
            <person name="Vitale D."/>
            <person name="Liguori R."/>
            <person name="Piravandi E."/>
            <person name="Massenet O."/>
            <person name="Quigley F."/>
            <person name="Clabauld G."/>
            <person name="Muendlein A."/>
            <person name="Felber R."/>
            <person name="Schnabl S."/>
            <person name="Hiller R."/>
            <person name="Schmidt W."/>
            <person name="Lecharny A."/>
            <person name="Aubourg S."/>
            <person name="Chefdor F."/>
            <person name="Cooke R."/>
            <person name="Berger C."/>
            <person name="Monfort A."/>
            <person name="Casacuberta E."/>
            <person name="Gibbons T."/>
            <person name="Weber N."/>
            <person name="Vandenbol M."/>
            <person name="Bargues M."/>
            <person name="Terol J."/>
            <person name="Torres A."/>
            <person name="Perez-Perez A."/>
            <person name="Purnelle B."/>
            <person name="Bent E."/>
            <person name="Johnson S."/>
            <person name="Tacon D."/>
            <person name="Jesse T."/>
            <person name="Heijnen L."/>
            <person name="Schwarz S."/>
            <person name="Scholler P."/>
            <person name="Heber S."/>
            <person name="Francs P."/>
            <person name="Bielke C."/>
            <person name="Frishman D."/>
            <person name="Haase D."/>
            <person name="Lemcke K."/>
            <person name="Mewes H.-W."/>
            <person name="Stocker S."/>
            <person name="Zaccaria P."/>
            <person name="Bevan M."/>
            <person name="Wilson R.K."/>
            <person name="de la Bastide M."/>
            <person name="Habermann K."/>
            <person name="Parnell L."/>
            <person name="Dedhia N."/>
            <person name="Gnoj L."/>
            <person name="Schutz K."/>
            <person name="Huang E."/>
            <person name="Spiegel L."/>
            <person name="Sekhon M."/>
            <person name="Murray J."/>
            <person name="Sheet P."/>
            <person name="Cordes M."/>
            <person name="Abu-Threideh J."/>
            <person name="Stoneking T."/>
            <person name="Kalicki J."/>
            <person name="Graves T."/>
            <person name="Harmon G."/>
            <person name="Edwards J."/>
            <person name="Latreille P."/>
            <person name="Courtney L."/>
            <person name="Cloud J."/>
            <person name="Abbott A."/>
            <person name="Scott K."/>
            <person name="Johnson D."/>
            <person name="Minx P."/>
            <person name="Bentley D."/>
            <person name="Fulton B."/>
            <person name="Miller N."/>
            <person name="Greco T."/>
            <person name="Kemp K."/>
            <person name="Kramer J."/>
            <person name="Fulton L."/>
            <person name="Mardis E."/>
            <person name="Dante M."/>
            <person name="Pepin K."/>
            <person name="Hillier L.W."/>
            <person name="Nelson J."/>
            <person name="Spieth J."/>
            <person name="Ryan E."/>
            <person name="Andrews S."/>
            <person name="Geisel C."/>
            <person name="Layman D."/>
            <person name="Du H."/>
            <person name="Ali J."/>
            <person name="Berghoff A."/>
            <person name="Jones K."/>
            <person name="Drone K."/>
            <person name="Cotton M."/>
            <person name="Joshu C."/>
            <person name="Antonoiu B."/>
            <person name="Zidanic M."/>
            <person name="Strong C."/>
            <person name="Sun H."/>
            <person name="Lamar B."/>
            <person name="Yordan C."/>
            <person name="Ma P."/>
            <person name="Zhong J."/>
            <person name="Preston R."/>
            <person name="Vil D."/>
            <person name="Shekher M."/>
            <person name="Matero A."/>
            <person name="Shah R."/>
            <person name="Swaby I.K."/>
            <person name="O'Shaughnessy A."/>
            <person name="Rodriguez M."/>
            <person name="Hoffman J."/>
            <person name="Till S."/>
            <person name="Granat S."/>
            <person name="Shohdy N."/>
            <person name="Hasegawa A."/>
            <person name="Hameed A."/>
            <person name="Lodhi M."/>
            <person name="Johnson A."/>
            <person name="Chen E."/>
            <person name="Marra M.A."/>
            <person name="Martienssen R."/>
            <person name="McCombie W.R."/>
        </authorList>
    </citation>
    <scope>NUCLEOTIDE SEQUENCE [LARGE SCALE GENOMIC DNA]</scope>
    <source>
        <strain>cv. Columbia</strain>
    </source>
</reference>
<reference key="2">
    <citation type="journal article" date="2017" name="Plant J.">
        <title>Araport11: a complete reannotation of the Arabidopsis thaliana reference genome.</title>
        <authorList>
            <person name="Cheng C.Y."/>
            <person name="Krishnakumar V."/>
            <person name="Chan A.P."/>
            <person name="Thibaud-Nissen F."/>
            <person name="Schobel S."/>
            <person name="Town C.D."/>
        </authorList>
    </citation>
    <scope>GENOME REANNOTATION</scope>
    <source>
        <strain>cv. Columbia</strain>
    </source>
</reference>
<reference key="3">
    <citation type="journal article" date="2003" name="Science">
        <title>Empirical analysis of transcriptional activity in the Arabidopsis genome.</title>
        <authorList>
            <person name="Yamada K."/>
            <person name="Lim J."/>
            <person name="Dale J.M."/>
            <person name="Chen H."/>
            <person name="Shinn P."/>
            <person name="Palm C.J."/>
            <person name="Southwick A.M."/>
            <person name="Wu H.C."/>
            <person name="Kim C.J."/>
            <person name="Nguyen M."/>
            <person name="Pham P.K."/>
            <person name="Cheuk R.F."/>
            <person name="Karlin-Newmann G."/>
            <person name="Liu S.X."/>
            <person name="Lam B."/>
            <person name="Sakano H."/>
            <person name="Wu T."/>
            <person name="Yu G."/>
            <person name="Miranda M."/>
            <person name="Quach H.L."/>
            <person name="Tripp M."/>
            <person name="Chang C.H."/>
            <person name="Lee J.M."/>
            <person name="Toriumi M.J."/>
            <person name="Chan M.M."/>
            <person name="Tang C.C."/>
            <person name="Onodera C.S."/>
            <person name="Deng J.M."/>
            <person name="Akiyama K."/>
            <person name="Ansari Y."/>
            <person name="Arakawa T."/>
            <person name="Banh J."/>
            <person name="Banno F."/>
            <person name="Bowser L."/>
            <person name="Brooks S.Y."/>
            <person name="Carninci P."/>
            <person name="Chao Q."/>
            <person name="Choy N."/>
            <person name="Enju A."/>
            <person name="Goldsmith A.D."/>
            <person name="Gurjal M."/>
            <person name="Hansen N.F."/>
            <person name="Hayashizaki Y."/>
            <person name="Johnson-Hopson C."/>
            <person name="Hsuan V.W."/>
            <person name="Iida K."/>
            <person name="Karnes M."/>
            <person name="Khan S."/>
            <person name="Koesema E."/>
            <person name="Ishida J."/>
            <person name="Jiang P.X."/>
            <person name="Jones T."/>
            <person name="Kawai J."/>
            <person name="Kamiya A."/>
            <person name="Meyers C."/>
            <person name="Nakajima M."/>
            <person name="Narusaka M."/>
            <person name="Seki M."/>
            <person name="Sakurai T."/>
            <person name="Satou M."/>
            <person name="Tamse R."/>
            <person name="Vaysberg M."/>
            <person name="Wallender E.K."/>
            <person name="Wong C."/>
            <person name="Yamamura Y."/>
            <person name="Yuan S."/>
            <person name="Shinozaki K."/>
            <person name="Davis R.W."/>
            <person name="Theologis A."/>
            <person name="Ecker J.R."/>
        </authorList>
    </citation>
    <scope>NUCLEOTIDE SEQUENCE [LARGE SCALE MRNA]</scope>
    <source>
        <strain>cv. Columbia</strain>
    </source>
</reference>
<reference key="4">
    <citation type="submission" date="2006-07" db="EMBL/GenBank/DDBJ databases">
        <title>Large-scale analysis of RIKEN Arabidopsis full-length (RAFL) cDNAs.</title>
        <authorList>
            <person name="Totoki Y."/>
            <person name="Seki M."/>
            <person name="Ishida J."/>
            <person name="Nakajima M."/>
            <person name="Enju A."/>
            <person name="Kamiya A."/>
            <person name="Narusaka M."/>
            <person name="Shin-i T."/>
            <person name="Nakagawa M."/>
            <person name="Sakamoto N."/>
            <person name="Oishi K."/>
            <person name="Kohara Y."/>
            <person name="Kobayashi M."/>
            <person name="Toyoda A."/>
            <person name="Sakaki Y."/>
            <person name="Sakurai T."/>
            <person name="Iida K."/>
            <person name="Akiyama K."/>
            <person name="Satou M."/>
            <person name="Toyoda T."/>
            <person name="Konagaya A."/>
            <person name="Carninci P."/>
            <person name="Kawai J."/>
            <person name="Hayashizaki Y."/>
            <person name="Shinozaki K."/>
        </authorList>
    </citation>
    <scope>NUCLEOTIDE SEQUENCE [LARGE SCALE MRNA]</scope>
    <source>
        <strain>cv. Columbia</strain>
    </source>
</reference>
<proteinExistence type="evidence at transcript level"/>
<sequence length="207" mass="22399">MPRYYCDYCDTYLTHDSPSVRKQHNAGYKHKANVRIYYQQFEEQQTQSLIDQRIKEHLGQTGGYQQVGAVFNQHMLARPRPPMMLPPGSMPMGMRPPVLPRPMMPPQGYMPPPGVPQMMAPPGAPLPPPPQNGILRPPGMAPIPGQGGGPPGMAPIPGQGGGPPPNYNGLPPPPPYHTNPAAPPSGNFNNPNLNNPNPSAESPESNE</sequence>
<protein>
    <recommendedName>
        <fullName evidence="1">U1 small nuclear ribonucleoprotein C</fullName>
        <shortName evidence="1">U1 snRNP C</shortName>
        <shortName evidence="1">U1-C</shortName>
        <shortName evidence="1">U1C</shortName>
    </recommendedName>
</protein>
<organism>
    <name type="scientific">Arabidopsis thaliana</name>
    <name type="common">Mouse-ear cress</name>
    <dbReference type="NCBI Taxonomy" id="3702"/>
    <lineage>
        <taxon>Eukaryota</taxon>
        <taxon>Viridiplantae</taxon>
        <taxon>Streptophyta</taxon>
        <taxon>Embryophyta</taxon>
        <taxon>Tracheophyta</taxon>
        <taxon>Spermatophyta</taxon>
        <taxon>Magnoliopsida</taxon>
        <taxon>eudicotyledons</taxon>
        <taxon>Gunneridae</taxon>
        <taxon>Pentapetalae</taxon>
        <taxon>rosids</taxon>
        <taxon>malvids</taxon>
        <taxon>Brassicales</taxon>
        <taxon>Brassicaceae</taxon>
        <taxon>Camelineae</taxon>
        <taxon>Arabidopsis</taxon>
    </lineage>
</organism>
<gene>
    <name type="ordered locus">At4g03120</name>
    <name type="ORF">F4C21.4</name>
</gene>
<feature type="chain" id="PRO_0000414269" description="U1 small nuclear ribonucleoprotein C">
    <location>
        <begin position="1"/>
        <end position="207"/>
    </location>
</feature>
<feature type="zinc finger region" description="Matrin-type" evidence="1">
    <location>
        <begin position="4"/>
        <end position="36"/>
    </location>
</feature>
<feature type="region of interest" description="Disordered" evidence="2">
    <location>
        <begin position="105"/>
        <end position="207"/>
    </location>
</feature>
<feature type="compositionally biased region" description="Pro residues" evidence="2">
    <location>
        <begin position="105"/>
        <end position="115"/>
    </location>
</feature>
<feature type="compositionally biased region" description="Pro residues" evidence="2">
    <location>
        <begin position="122"/>
        <end position="131"/>
    </location>
</feature>
<feature type="compositionally biased region" description="Low complexity" evidence="2">
    <location>
        <begin position="132"/>
        <end position="144"/>
    </location>
</feature>
<feature type="compositionally biased region" description="Pro residues" evidence="2">
    <location>
        <begin position="162"/>
        <end position="183"/>
    </location>
</feature>
<feature type="compositionally biased region" description="Low complexity" evidence="2">
    <location>
        <begin position="184"/>
        <end position="207"/>
    </location>
</feature>
<feature type="sequence conflict" description="In Ref. 3; AAO44073 and 4; BAE99804." evidence="3" ref="3 4">
    <original>Y</original>
    <variation>H</variation>
    <location>
        <position position="38"/>
    </location>
</feature>
<keyword id="KW-0479">Metal-binding</keyword>
<keyword id="KW-0539">Nucleus</keyword>
<keyword id="KW-1185">Reference proteome</keyword>
<keyword id="KW-0687">Ribonucleoprotein</keyword>
<keyword id="KW-0694">RNA-binding</keyword>
<keyword id="KW-0862">Zinc</keyword>
<keyword id="KW-0863">Zinc-finger</keyword>